<proteinExistence type="evidence at protein level"/>
<accession>Q5XG69</accession>
<accession>E9Q0D7</accession>
<accession>Q69ZW7</accession>
<comment type="subcellular location">
    <subcellularLocation>
        <location evidence="1">Nucleus envelope</location>
    </subcellularLocation>
    <subcellularLocation>
        <location evidence="1">Nucleus inner membrane</location>
        <topology evidence="1">Peripheral membrane protein</topology>
        <orientation evidence="1">Nucleoplasmic side</orientation>
    </subcellularLocation>
    <text evidence="1">Enriched at the nuclear lamina.</text>
</comment>
<comment type="similarity">
    <text evidence="4">Belongs to the FAM169 family.</text>
</comment>
<comment type="sequence caution" evidence="4">
    <conflict type="erroneous initiation">
        <sequence resource="EMBL-CDS" id="AAH84589"/>
    </conflict>
    <text>Extended N-terminus.</text>
</comment>
<comment type="sequence caution" evidence="4">
    <conflict type="erroneous initiation">
        <sequence resource="EMBL-CDS" id="BAD32329"/>
    </conflict>
    <text>Extended N-terminus.</text>
</comment>
<reference key="1">
    <citation type="journal article" date="2004" name="DNA Res.">
        <title>Prediction of the coding sequences of mouse homologues of KIAA gene: IV. The complete nucleotide sequences of 500 mouse KIAA-homologous cDNAs identified by screening of terminal sequences of cDNA clones randomly sampled from size-fractionated libraries.</title>
        <authorList>
            <person name="Okazaki N."/>
            <person name="Kikuno R."/>
            <person name="Ohara R."/>
            <person name="Inamoto S."/>
            <person name="Koseki H."/>
            <person name="Hiraoka S."/>
            <person name="Saga Y."/>
            <person name="Seino S."/>
            <person name="Nishimura M."/>
            <person name="Kaisho T."/>
            <person name="Hoshino K."/>
            <person name="Kitamura H."/>
            <person name="Nagase T."/>
            <person name="Ohara O."/>
            <person name="Koga H."/>
        </authorList>
    </citation>
    <scope>NUCLEOTIDE SEQUENCE [LARGE SCALE MRNA]</scope>
    <source>
        <tissue>Fetal brain</tissue>
    </source>
</reference>
<reference key="2">
    <citation type="journal article" date="2009" name="PLoS Biol.">
        <title>Lineage-specific biology revealed by a finished genome assembly of the mouse.</title>
        <authorList>
            <person name="Church D.M."/>
            <person name="Goodstadt L."/>
            <person name="Hillier L.W."/>
            <person name="Zody M.C."/>
            <person name="Goldstein S."/>
            <person name="She X."/>
            <person name="Bult C.J."/>
            <person name="Agarwala R."/>
            <person name="Cherry J.L."/>
            <person name="DiCuccio M."/>
            <person name="Hlavina W."/>
            <person name="Kapustin Y."/>
            <person name="Meric P."/>
            <person name="Maglott D."/>
            <person name="Birtle Z."/>
            <person name="Marques A.C."/>
            <person name="Graves T."/>
            <person name="Zhou S."/>
            <person name="Teague B."/>
            <person name="Potamousis K."/>
            <person name="Churas C."/>
            <person name="Place M."/>
            <person name="Herschleb J."/>
            <person name="Runnheim R."/>
            <person name="Forrest D."/>
            <person name="Amos-Landgraf J."/>
            <person name="Schwartz D.C."/>
            <person name="Cheng Z."/>
            <person name="Lindblad-Toh K."/>
            <person name="Eichler E.E."/>
            <person name="Ponting C.P."/>
        </authorList>
    </citation>
    <scope>NUCLEOTIDE SEQUENCE [LARGE SCALE GENOMIC DNA]</scope>
    <source>
        <strain>C57BL/6J</strain>
    </source>
</reference>
<reference key="3">
    <citation type="journal article" date="2004" name="Genome Res.">
        <title>The status, quality, and expansion of the NIH full-length cDNA project: the Mammalian Gene Collection (MGC).</title>
        <authorList>
            <consortium name="The MGC Project Team"/>
        </authorList>
    </citation>
    <scope>NUCLEOTIDE SEQUENCE [LARGE SCALE MRNA]</scope>
    <source>
        <strain>C57BL/6J</strain>
        <tissue>Embryonic germ cell</tissue>
    </source>
</reference>
<reference key="4">
    <citation type="journal article" date="2007" name="J. Proteome Res.">
        <title>A differential phosphoproteomic analysis of retinoic acid-treated P19 cells.</title>
        <authorList>
            <person name="Smith J.C."/>
            <person name="Duchesne M.A."/>
            <person name="Tozzi P."/>
            <person name="Ethier M."/>
            <person name="Figeys D."/>
        </authorList>
    </citation>
    <scope>IDENTIFICATION BY MASS SPECTROMETRY [LARGE SCALE ANALYSIS]</scope>
    <source>
        <tissue>Teratocarcinoma</tissue>
    </source>
</reference>
<reference key="5">
    <citation type="journal article" date="2010" name="Cell">
        <title>A tissue-specific atlas of mouse protein phosphorylation and expression.</title>
        <authorList>
            <person name="Huttlin E.L."/>
            <person name="Jedrychowski M.P."/>
            <person name="Elias J.E."/>
            <person name="Goswami T."/>
            <person name="Rad R."/>
            <person name="Beausoleil S.A."/>
            <person name="Villen J."/>
            <person name="Haas W."/>
            <person name="Sowa M.E."/>
            <person name="Gygi S.P."/>
        </authorList>
    </citation>
    <scope>PHOSPHORYLATION [LARGE SCALE ANALYSIS] AT SER-348; SER-377; SER-512; SER-610; SER-613 AND SER-630</scope>
    <scope>IDENTIFICATION BY MASS SPECTROMETRY [LARGE SCALE ANALYSIS]</scope>
    <source>
        <tissue>Brain</tissue>
        <tissue>Testis</tissue>
    </source>
</reference>
<sequence length="665" mass="73240">MAFPVDLLDNCTHEELENSSEDYLSSLRCGDPEHPECFSSLNITIPVSLSNVGFVPLYGGNQTQKILALFAPEDSLTAVALYLVGQWWAIDDIVKTSEPSREGLKQVSTLGERVVLYVLNRIIYRKQEMERNEIPFLCHSSTDYAKILWKKGEAVGFYSVKPTGSLCASFLTQNYQLPVLDTMFIRKKYRGKDLGLHMLEDFVDSFTEDALGLRYPLSSLMYTASKQYFEKYPGDHELLWEVEGVGHWHQRVPVTRALQREAIKATDVSQYEATRPVSGEYGLAAVPEHEPGLDDTQSSELQIHSLKDAFASTSEGPEKTPVSTRTRSSHLKRPKIGKHFQDSEFSSSQGEDENVAKTSPTASVNKIEYAARTSESSEEFLEEEPEQGVIDFEDESGDKDAQPALETQPRLQKQDGDKDSALEPVNGEVMDAALKPSLTTEDEDSTSEGLEEDLKVPPFNSSGEPGNPVPLVAESSKVPEATLAKTSPDTDSEMLIDQSPSDDKGHTEENLSPVSKKKTLLGSSDNVATVSNIEKSDGNFPNSVVPEFPEEPVSQNLSPNTTSSVEDQGEEGAPEAQEPSATQSSLIEVELEDAPFPQNAGQKSQSEEQSEASSEHLEQFTQSAEKAVDSSSEEIEVEVPVVDRRNLRRKAKGHKGPGKKKAKLT</sequence>
<name>F169A_MOUSE</name>
<protein>
    <recommendedName>
        <fullName>Soluble lamin-associated protein of 75 kDa</fullName>
        <shortName>SLAP75</shortName>
    </recommendedName>
    <alternativeName>
        <fullName>Protein FAM169A</fullName>
    </alternativeName>
</protein>
<gene>
    <name type="primary">Fam169a</name>
    <name type="synonym">Kiaa0888</name>
</gene>
<keyword id="KW-0472">Membrane</keyword>
<keyword id="KW-0539">Nucleus</keyword>
<keyword id="KW-0597">Phosphoprotein</keyword>
<keyword id="KW-1185">Reference proteome</keyword>
<feature type="chain" id="PRO_0000320588" description="Soluble lamin-associated protein of 75 kDa">
    <location>
        <begin position="1"/>
        <end position="665"/>
    </location>
</feature>
<feature type="region of interest" description="Disordered" evidence="3">
    <location>
        <begin position="309"/>
        <end position="665"/>
    </location>
</feature>
<feature type="compositionally biased region" description="Polar residues" evidence="3">
    <location>
        <begin position="311"/>
        <end position="326"/>
    </location>
</feature>
<feature type="compositionally biased region" description="Basic residues" evidence="3">
    <location>
        <begin position="327"/>
        <end position="338"/>
    </location>
</feature>
<feature type="compositionally biased region" description="Acidic residues" evidence="3">
    <location>
        <begin position="376"/>
        <end position="397"/>
    </location>
</feature>
<feature type="compositionally biased region" description="Basic and acidic residues" evidence="3">
    <location>
        <begin position="412"/>
        <end position="421"/>
    </location>
</feature>
<feature type="compositionally biased region" description="Acidic residues" evidence="3">
    <location>
        <begin position="440"/>
        <end position="451"/>
    </location>
</feature>
<feature type="compositionally biased region" description="Polar residues" evidence="3">
    <location>
        <begin position="521"/>
        <end position="533"/>
    </location>
</feature>
<feature type="compositionally biased region" description="Polar residues" evidence="3">
    <location>
        <begin position="553"/>
        <end position="566"/>
    </location>
</feature>
<feature type="compositionally biased region" description="Basic residues" evidence="3">
    <location>
        <begin position="646"/>
        <end position="665"/>
    </location>
</feature>
<feature type="modified residue" description="Phosphoserine" evidence="5">
    <location>
        <position position="348"/>
    </location>
</feature>
<feature type="modified residue" description="Phosphoserine" evidence="5">
    <location>
        <position position="377"/>
    </location>
</feature>
<feature type="modified residue" description="Phosphoserine" evidence="2">
    <location>
        <position position="447"/>
    </location>
</feature>
<feature type="modified residue" description="Phosphoserine" evidence="5">
    <location>
        <position position="512"/>
    </location>
</feature>
<feature type="modified residue" description="Phosphoserine" evidence="5">
    <location>
        <position position="610"/>
    </location>
</feature>
<feature type="modified residue" description="Phosphoserine" evidence="5">
    <location>
        <position position="613"/>
    </location>
</feature>
<feature type="modified residue" description="Phosphoserine" evidence="5">
    <location>
        <position position="630"/>
    </location>
</feature>
<feature type="sequence conflict" description="In Ref. 3; AAH84589." evidence="4" ref="3">
    <original>E</original>
    <variation>G</variation>
    <location>
        <position position="112"/>
    </location>
</feature>
<feature type="sequence conflict" description="In Ref. 1; BAD32329." evidence="4" ref="1">
    <original>H</original>
    <variation>R</variation>
    <location>
        <position position="339"/>
    </location>
</feature>
<evidence type="ECO:0000250" key="1"/>
<evidence type="ECO:0000250" key="2">
    <source>
        <dbReference type="UniProtKB" id="Q9Y6X4"/>
    </source>
</evidence>
<evidence type="ECO:0000256" key="3">
    <source>
        <dbReference type="SAM" id="MobiDB-lite"/>
    </source>
</evidence>
<evidence type="ECO:0000305" key="4"/>
<evidence type="ECO:0007744" key="5">
    <source>
    </source>
</evidence>
<dbReference type="EMBL" id="AK173051">
    <property type="protein sequence ID" value="BAD32329.1"/>
    <property type="status" value="ALT_INIT"/>
    <property type="molecule type" value="mRNA"/>
</dbReference>
<dbReference type="EMBL" id="AC154620">
    <property type="status" value="NOT_ANNOTATED_CDS"/>
    <property type="molecule type" value="Genomic_DNA"/>
</dbReference>
<dbReference type="EMBL" id="BC084589">
    <property type="protein sequence ID" value="AAH84589.1"/>
    <property type="status" value="ALT_INIT"/>
    <property type="molecule type" value="mRNA"/>
</dbReference>
<dbReference type="CCDS" id="CCDS49337.1"/>
<dbReference type="RefSeq" id="NP_001093928.1">
    <property type="nucleotide sequence ID" value="NM_001100458.1"/>
</dbReference>
<dbReference type="RefSeq" id="NP_001139517.1">
    <property type="nucleotide sequence ID" value="NM_001146045.1"/>
</dbReference>
<dbReference type="RefSeq" id="XP_006517749.1">
    <property type="nucleotide sequence ID" value="XM_006517686.4"/>
</dbReference>
<dbReference type="RefSeq" id="XP_011242971.1">
    <property type="nucleotide sequence ID" value="XM_011244669.3"/>
</dbReference>
<dbReference type="RefSeq" id="XP_036013962.1">
    <property type="nucleotide sequence ID" value="XM_036158069.1"/>
</dbReference>
<dbReference type="BioGRID" id="236114">
    <property type="interactions" value="9"/>
</dbReference>
<dbReference type="FunCoup" id="Q5XG69">
    <property type="interactions" value="54"/>
</dbReference>
<dbReference type="STRING" id="10090.ENSMUSP00000126209"/>
<dbReference type="GlyGen" id="Q5XG69">
    <property type="glycosylation" value="2 sites, 1 N-linked glycan (1 site)"/>
</dbReference>
<dbReference type="iPTMnet" id="Q5XG69"/>
<dbReference type="PhosphoSitePlus" id="Q5XG69"/>
<dbReference type="SwissPalm" id="Q5XG69"/>
<dbReference type="PaxDb" id="10090-ENSMUSP00000043738"/>
<dbReference type="PeptideAtlas" id="Q5XG69"/>
<dbReference type="ProteomicsDB" id="275972"/>
<dbReference type="Antibodypedia" id="48666">
    <property type="antibodies" value="10 antibodies from 9 providers"/>
</dbReference>
<dbReference type="Ensembl" id="ENSMUST00000042517.8">
    <property type="protein sequence ID" value="ENSMUSP00000043738.7"/>
    <property type="gene ID" value="ENSMUSG00000041817.15"/>
</dbReference>
<dbReference type="Ensembl" id="ENSMUST00000169863.9">
    <property type="protein sequence ID" value="ENSMUSP00000126209.2"/>
    <property type="gene ID" value="ENSMUSG00000041817.15"/>
</dbReference>
<dbReference type="GeneID" id="320557"/>
<dbReference type="KEGG" id="mmu:320557"/>
<dbReference type="UCSC" id="uc007rnr.2">
    <property type="organism name" value="mouse"/>
</dbReference>
<dbReference type="AGR" id="MGI:2444268"/>
<dbReference type="CTD" id="26049"/>
<dbReference type="MGI" id="MGI:2444268">
    <property type="gene designation" value="Fam169a"/>
</dbReference>
<dbReference type="VEuPathDB" id="HostDB:ENSMUSG00000041817"/>
<dbReference type="eggNOG" id="ENOG502QPRQ">
    <property type="taxonomic scope" value="Eukaryota"/>
</dbReference>
<dbReference type="GeneTree" id="ENSGT00510000048902"/>
<dbReference type="HOGENOM" id="CLU_026572_1_0_1"/>
<dbReference type="InParanoid" id="Q5XG69"/>
<dbReference type="OMA" id="DQTHKVL"/>
<dbReference type="OrthoDB" id="8954808at2759"/>
<dbReference type="PhylomeDB" id="Q5XG69"/>
<dbReference type="TreeFam" id="TF332578"/>
<dbReference type="Reactome" id="R-MMU-9035034">
    <property type="pathway name" value="RHOF GTPase cycle"/>
</dbReference>
<dbReference type="BioGRID-ORCS" id="320557">
    <property type="hits" value="1 hit in 77 CRISPR screens"/>
</dbReference>
<dbReference type="ChiTaRS" id="Fam169a">
    <property type="organism name" value="mouse"/>
</dbReference>
<dbReference type="PRO" id="PR:Q5XG69"/>
<dbReference type="Proteomes" id="UP000000589">
    <property type="component" value="Chromosome 13"/>
</dbReference>
<dbReference type="RNAct" id="Q5XG69">
    <property type="molecule type" value="protein"/>
</dbReference>
<dbReference type="Bgee" id="ENSMUSG00000041817">
    <property type="expression patterns" value="Expressed in retinal neural layer and 156 other cell types or tissues"/>
</dbReference>
<dbReference type="GO" id="GO:0005637">
    <property type="term" value="C:nuclear inner membrane"/>
    <property type="evidence" value="ECO:0007669"/>
    <property type="project" value="UniProtKB-SubCell"/>
</dbReference>
<dbReference type="InterPro" id="IPR029625">
    <property type="entry name" value="FAM169"/>
</dbReference>
<dbReference type="PANTHER" id="PTHR22442">
    <property type="match status" value="1"/>
</dbReference>
<dbReference type="PANTHER" id="PTHR22442:SF3">
    <property type="entry name" value="SOLUBLE LAMIN-ASSOCIATED PROTEIN OF 75 KDA"/>
    <property type="match status" value="1"/>
</dbReference>
<organism>
    <name type="scientific">Mus musculus</name>
    <name type="common">Mouse</name>
    <dbReference type="NCBI Taxonomy" id="10090"/>
    <lineage>
        <taxon>Eukaryota</taxon>
        <taxon>Metazoa</taxon>
        <taxon>Chordata</taxon>
        <taxon>Craniata</taxon>
        <taxon>Vertebrata</taxon>
        <taxon>Euteleostomi</taxon>
        <taxon>Mammalia</taxon>
        <taxon>Eutheria</taxon>
        <taxon>Euarchontoglires</taxon>
        <taxon>Glires</taxon>
        <taxon>Rodentia</taxon>
        <taxon>Myomorpha</taxon>
        <taxon>Muroidea</taxon>
        <taxon>Muridae</taxon>
        <taxon>Murinae</taxon>
        <taxon>Mus</taxon>
        <taxon>Mus</taxon>
    </lineage>
</organism>